<name>BCL7B_MOUSE</name>
<accession>Q921K9</accession>
<accession>O89022</accession>
<accession>Q3TV31</accession>
<accession>Q3U2W0</accession>
<keyword id="KW-0025">Alternative splicing</keyword>
<keyword id="KW-0053">Apoptosis</keyword>
<keyword id="KW-0221">Differentiation</keyword>
<keyword id="KW-0597">Phosphoprotein</keyword>
<keyword id="KW-1185">Reference proteome</keyword>
<keyword id="KW-0879">Wnt signaling pathway</keyword>
<organism>
    <name type="scientific">Mus musculus</name>
    <name type="common">Mouse</name>
    <dbReference type="NCBI Taxonomy" id="10090"/>
    <lineage>
        <taxon>Eukaryota</taxon>
        <taxon>Metazoa</taxon>
        <taxon>Chordata</taxon>
        <taxon>Craniata</taxon>
        <taxon>Vertebrata</taxon>
        <taxon>Euteleostomi</taxon>
        <taxon>Mammalia</taxon>
        <taxon>Eutheria</taxon>
        <taxon>Euarchontoglires</taxon>
        <taxon>Glires</taxon>
        <taxon>Rodentia</taxon>
        <taxon>Myomorpha</taxon>
        <taxon>Muroidea</taxon>
        <taxon>Muridae</taxon>
        <taxon>Murinae</taxon>
        <taxon>Mus</taxon>
        <taxon>Mus</taxon>
    </lineage>
</organism>
<gene>
    <name type="primary">Bcl7b</name>
</gene>
<evidence type="ECO:0000250" key="1">
    <source>
        <dbReference type="UniProtKB" id="Q9BQE9"/>
    </source>
</evidence>
<evidence type="ECO:0000256" key="2">
    <source>
        <dbReference type="SAM" id="MobiDB-lite"/>
    </source>
</evidence>
<evidence type="ECO:0000269" key="3">
    <source>
    </source>
</evidence>
<evidence type="ECO:0000303" key="4">
    <source>
    </source>
</evidence>
<evidence type="ECO:0000305" key="5"/>
<evidence type="ECO:0007744" key="6">
    <source>
    </source>
</evidence>
<evidence type="ECO:0007744" key="7">
    <source>
    </source>
</evidence>
<protein>
    <recommendedName>
        <fullName>B-cell CLL/lymphoma 7 protein family member B</fullName>
    </recommendedName>
</protein>
<dbReference type="EMBL" id="AJ011145">
    <property type="protein sequence ID" value="CAA09501.1"/>
    <property type="status" value="ALT_INIT"/>
    <property type="molecule type" value="mRNA"/>
</dbReference>
<dbReference type="EMBL" id="AK131643">
    <property type="protein sequence ID" value="BAE20736.1"/>
    <property type="molecule type" value="mRNA"/>
</dbReference>
<dbReference type="EMBL" id="AK155076">
    <property type="protein sequence ID" value="BAE33030.1"/>
    <property type="molecule type" value="mRNA"/>
</dbReference>
<dbReference type="EMBL" id="AK160439">
    <property type="protein sequence ID" value="BAE35789.1"/>
    <property type="molecule type" value="mRNA"/>
</dbReference>
<dbReference type="EMBL" id="BC011471">
    <property type="protein sequence ID" value="AAH11471.1"/>
    <property type="molecule type" value="mRNA"/>
</dbReference>
<dbReference type="CCDS" id="CCDS51660.1">
    <molecule id="Q921K9-1"/>
</dbReference>
<dbReference type="RefSeq" id="NP_033875.2">
    <molecule id="Q921K9-1"/>
    <property type="nucleotide sequence ID" value="NM_009745.2"/>
</dbReference>
<dbReference type="BioGRID" id="198328">
    <property type="interactions" value="19"/>
</dbReference>
<dbReference type="ComplexPortal" id="CPX-1251">
    <property type="entry name" value="Embryonic stem cell-specific SWI/SNF ATP-dependent chromatin remodeling complex"/>
</dbReference>
<dbReference type="ComplexPortal" id="CPX-4202">
    <property type="entry name" value="GBAF (SWI/SNF) ATP-dependent chromatin remodeling complex, ACTL6A-BICRA-SMARCA2 variant"/>
</dbReference>
<dbReference type="ComplexPortal" id="CPX-4204">
    <property type="entry name" value="GBAF (SWI/SNF) ATP-dependent chromatin remodeling complex, ACTL6A-BICRAL-SMARCA2 variant"/>
</dbReference>
<dbReference type="ComplexPortal" id="CPX-4221">
    <property type="entry name" value="GBAF (SWI/SNF) ATP-dependent chromatin remodeling complex, ACTL6A-BICRA-SMARCA4 variant"/>
</dbReference>
<dbReference type="ComplexPortal" id="CPX-4222">
    <property type="entry name" value="GBAF (SWI/SNF) ATP-dependent chromatin remodeling complex, ACTL6A-BICRAL-SMARCA4 variant"/>
</dbReference>
<dbReference type="ComplexPortal" id="CPX-4227">
    <property type="entry name" value="GBAF (SWI/SNF) ATP-dependent chromatin remodeling complex, ACTL6B-BICRA-SMARCA2 variant"/>
</dbReference>
<dbReference type="ComplexPortal" id="CPX-4228">
    <property type="entry name" value="GBAF (SWI/SNF) ATP-dependent chromatin remodeling complex, ACTL6B-BICRAL-SMARCA2 variant"/>
</dbReference>
<dbReference type="ComplexPortal" id="CPX-4229">
    <property type="entry name" value="GBAF (SWI/SNF) ATP-dependent chromatin remodeling complex, ACTL6B-BICRA-SMARCA4 variant"/>
</dbReference>
<dbReference type="ComplexPortal" id="CPX-4230">
    <property type="entry name" value="GBAF (SWI/SNF) ATP-dependent chromatin remodeling complex, ACTL6B-BICRAL-SMARCA4 variant"/>
</dbReference>
<dbReference type="FunCoup" id="Q921K9">
    <property type="interactions" value="2019"/>
</dbReference>
<dbReference type="IntAct" id="Q921K9">
    <property type="interactions" value="18"/>
</dbReference>
<dbReference type="STRING" id="10090.ENSMUSP00000031692"/>
<dbReference type="GlyGen" id="Q921K9">
    <property type="glycosylation" value="2 sites, 1 O-linked glycan (2 sites)"/>
</dbReference>
<dbReference type="iPTMnet" id="Q921K9"/>
<dbReference type="PhosphoSitePlus" id="Q921K9"/>
<dbReference type="PaxDb" id="10090-ENSMUSP00000031692"/>
<dbReference type="PeptideAtlas" id="Q921K9"/>
<dbReference type="ProteomicsDB" id="273659">
    <molecule id="Q921K9-1"/>
</dbReference>
<dbReference type="ProteomicsDB" id="273660">
    <molecule id="Q921K9-2"/>
</dbReference>
<dbReference type="Antibodypedia" id="28430">
    <property type="antibodies" value="258 antibodies from 26 providers"/>
</dbReference>
<dbReference type="DNASU" id="12054"/>
<dbReference type="Ensembl" id="ENSMUST00000031692.12">
    <molecule id="Q921K9-1"/>
    <property type="protein sequence ID" value="ENSMUSP00000031692.6"/>
    <property type="gene ID" value="ENSMUSG00000029681.13"/>
</dbReference>
<dbReference type="Ensembl" id="ENSMUST00000111187.10">
    <molecule id="Q921K9-2"/>
    <property type="protein sequence ID" value="ENSMUSP00000106818.4"/>
    <property type="gene ID" value="ENSMUSG00000029681.13"/>
</dbReference>
<dbReference type="GeneID" id="12054"/>
<dbReference type="KEGG" id="mmu:12054"/>
<dbReference type="UCSC" id="uc012een.1">
    <molecule id="Q921K9-1"/>
    <property type="organism name" value="mouse"/>
</dbReference>
<dbReference type="AGR" id="MGI:1332238"/>
<dbReference type="CTD" id="9275"/>
<dbReference type="MGI" id="MGI:1332238">
    <property type="gene designation" value="Bcl7b"/>
</dbReference>
<dbReference type="VEuPathDB" id="HostDB:ENSMUSG00000029681"/>
<dbReference type="eggNOG" id="KOG4095">
    <property type="taxonomic scope" value="Eukaryota"/>
</dbReference>
<dbReference type="GeneTree" id="ENSGT00390000002172"/>
<dbReference type="HOGENOM" id="CLU_197698_0_0_1"/>
<dbReference type="InParanoid" id="Q921K9"/>
<dbReference type="OMA" id="WVPVTDN"/>
<dbReference type="OrthoDB" id="5989898at2759"/>
<dbReference type="PhylomeDB" id="Q921K9"/>
<dbReference type="TreeFam" id="TF317441"/>
<dbReference type="BioGRID-ORCS" id="12054">
    <property type="hits" value="4 hits in 76 CRISPR screens"/>
</dbReference>
<dbReference type="ChiTaRS" id="Bcl7b">
    <property type="organism name" value="mouse"/>
</dbReference>
<dbReference type="PRO" id="PR:Q921K9"/>
<dbReference type="Proteomes" id="UP000000589">
    <property type="component" value="Chromosome 5"/>
</dbReference>
<dbReference type="RNAct" id="Q921K9">
    <property type="molecule type" value="protein"/>
</dbReference>
<dbReference type="Bgee" id="ENSMUSG00000029681">
    <property type="expression patterns" value="Expressed in retinal neural layer and 237 other cell types or tissues"/>
</dbReference>
<dbReference type="ExpressionAtlas" id="Q921K9">
    <property type="expression patterns" value="baseline and differential"/>
</dbReference>
<dbReference type="GO" id="GO:0000785">
    <property type="term" value="C:chromatin"/>
    <property type="evidence" value="ECO:0000303"/>
    <property type="project" value="ComplexPortal"/>
</dbReference>
<dbReference type="GO" id="GO:0140288">
    <property type="term" value="C:GBAF complex"/>
    <property type="evidence" value="ECO:0000303"/>
    <property type="project" value="ComplexPortal"/>
</dbReference>
<dbReference type="GO" id="GO:0005654">
    <property type="term" value="C:nucleoplasm"/>
    <property type="evidence" value="ECO:0000304"/>
    <property type="project" value="Reactome"/>
</dbReference>
<dbReference type="GO" id="GO:0016514">
    <property type="term" value="C:SWI/SNF complex"/>
    <property type="evidence" value="ECO:0000314"/>
    <property type="project" value="UniProtKB"/>
</dbReference>
<dbReference type="GO" id="GO:0006915">
    <property type="term" value="P:apoptotic process"/>
    <property type="evidence" value="ECO:0007669"/>
    <property type="project" value="UniProtKB-KW"/>
</dbReference>
<dbReference type="GO" id="GO:0030154">
    <property type="term" value="P:cell differentiation"/>
    <property type="evidence" value="ECO:0007669"/>
    <property type="project" value="UniProtKB-KW"/>
</dbReference>
<dbReference type="GO" id="GO:0006338">
    <property type="term" value="P:chromatin remodeling"/>
    <property type="evidence" value="ECO:0000303"/>
    <property type="project" value="ComplexPortal"/>
</dbReference>
<dbReference type="GO" id="GO:0045596">
    <property type="term" value="P:negative regulation of cell differentiation"/>
    <property type="evidence" value="ECO:0000303"/>
    <property type="project" value="ComplexPortal"/>
</dbReference>
<dbReference type="GO" id="GO:0008284">
    <property type="term" value="P:positive regulation of cell population proliferation"/>
    <property type="evidence" value="ECO:0000303"/>
    <property type="project" value="ComplexPortal"/>
</dbReference>
<dbReference type="GO" id="GO:2000781">
    <property type="term" value="P:positive regulation of double-strand break repair"/>
    <property type="evidence" value="ECO:0000303"/>
    <property type="project" value="ComplexPortal"/>
</dbReference>
<dbReference type="GO" id="GO:1902459">
    <property type="term" value="P:positive regulation of stem cell population maintenance"/>
    <property type="evidence" value="ECO:0000303"/>
    <property type="project" value="ComplexPortal"/>
</dbReference>
<dbReference type="GO" id="GO:0070316">
    <property type="term" value="P:regulation of G0 to G1 transition"/>
    <property type="evidence" value="ECO:0000303"/>
    <property type="project" value="ComplexPortal"/>
</dbReference>
<dbReference type="GO" id="GO:2000045">
    <property type="term" value="P:regulation of G1/S transition of mitotic cell cycle"/>
    <property type="evidence" value="ECO:0000303"/>
    <property type="project" value="ComplexPortal"/>
</dbReference>
<dbReference type="GO" id="GO:0030071">
    <property type="term" value="P:regulation of mitotic metaphase/anaphase transition"/>
    <property type="evidence" value="ECO:0000303"/>
    <property type="project" value="ComplexPortal"/>
</dbReference>
<dbReference type="GO" id="GO:2000819">
    <property type="term" value="P:regulation of nucleotide-excision repair"/>
    <property type="evidence" value="ECO:0000303"/>
    <property type="project" value="ComplexPortal"/>
</dbReference>
<dbReference type="GO" id="GO:0006357">
    <property type="term" value="P:regulation of transcription by RNA polymerase II"/>
    <property type="evidence" value="ECO:0000303"/>
    <property type="project" value="ComplexPortal"/>
</dbReference>
<dbReference type="GO" id="GO:0016055">
    <property type="term" value="P:Wnt signaling pathway"/>
    <property type="evidence" value="ECO:0007669"/>
    <property type="project" value="UniProtKB-KW"/>
</dbReference>
<dbReference type="InterPro" id="IPR006804">
    <property type="entry name" value="BCL7"/>
</dbReference>
<dbReference type="PANTHER" id="PTHR12767:SF5">
    <property type="entry name" value="B-CELL CLL_LYMPHOMA 7 PROTEIN FAMILY MEMBER B"/>
    <property type="match status" value="1"/>
</dbReference>
<dbReference type="PANTHER" id="PTHR12767">
    <property type="entry name" value="BCL7 RELATED"/>
    <property type="match status" value="1"/>
</dbReference>
<dbReference type="Pfam" id="PF04714">
    <property type="entry name" value="BCL_N"/>
    <property type="match status" value="1"/>
</dbReference>
<sequence length="202" mass="22238">MSGRSVRAETRSRAKDDIKKVMAAIEKVRKWEKKWVTVGDTSLRIFKWVPVTDSKEKEKSKSNNTAAREPNGFPSDASANSSLLLEFQDENSNQSSVSDVYQLKVDSSTNSSPSPQQSESLSPAHTSDFRTDDSQPPTLGQEILEEPSLPASEVADEPPTLTKEEPVPVETQTTEEEEDSGAPPLKRFCVDQPVVPQTTSES</sequence>
<proteinExistence type="evidence at protein level"/>
<feature type="chain" id="PRO_0000239830" description="B-cell CLL/lymphoma 7 protein family member B">
    <location>
        <begin position="1"/>
        <end position="202"/>
    </location>
</feature>
<feature type="region of interest" description="Disordered" evidence="2">
    <location>
        <begin position="53"/>
        <end position="202"/>
    </location>
</feature>
<feature type="compositionally biased region" description="Polar residues" evidence="2">
    <location>
        <begin position="90"/>
        <end position="99"/>
    </location>
</feature>
<feature type="compositionally biased region" description="Low complexity" evidence="2">
    <location>
        <begin position="107"/>
        <end position="123"/>
    </location>
</feature>
<feature type="modified residue" description="Phosphoserine" evidence="7">
    <location>
        <position position="114"/>
    </location>
</feature>
<feature type="modified residue" description="Phosphoserine" evidence="6 7">
    <location>
        <position position="118"/>
    </location>
</feature>
<feature type="modified residue" description="Phosphoserine" evidence="7">
    <location>
        <position position="120"/>
    </location>
</feature>
<feature type="modified residue" description="Phosphoserine" evidence="6 7">
    <location>
        <position position="122"/>
    </location>
</feature>
<feature type="modified residue" description="Phosphoserine" evidence="7">
    <location>
        <position position="127"/>
    </location>
</feature>
<feature type="modified residue" description="Phosphoserine" evidence="7">
    <location>
        <position position="148"/>
    </location>
</feature>
<feature type="modified residue" description="Phosphoserine" evidence="7">
    <location>
        <position position="152"/>
    </location>
</feature>
<feature type="splice variant" id="VSP_019280" description="In isoform 2." evidence="4">
    <original>KE</original>
    <variation>GF</variation>
    <location>
        <begin position="57"/>
        <end position="58"/>
    </location>
</feature>
<feature type="splice variant" id="VSP_019281" description="In isoform 2." evidence="4">
    <location>
        <begin position="59"/>
        <end position="202"/>
    </location>
</feature>
<feature type="sequence conflict" description="In Ref. 2; BAE33030." evidence="5" ref="2">
    <original>A</original>
    <variation>D</variation>
    <location>
        <position position="24"/>
    </location>
</feature>
<feature type="sequence conflict" description="In Ref. 2; BAE33030." evidence="5" ref="2">
    <original>Q</original>
    <variation>K</variation>
    <location>
        <position position="192"/>
    </location>
</feature>
<comment type="function">
    <text evidence="1 3">Positive regulator of apoptosis. Plays a role in the Wnt signaling pathway, negatively regulating the expression of Wnt signaling components CTNNB1 and HMGA1 (By similarity). Involved in cell cycle progression, maintenance of the nuclear structure and stem cell differentiation (By similarity). May play a role in lung tumor development or progression.</text>
</comment>
<comment type="alternative products">
    <event type="alternative splicing"/>
    <isoform>
        <id>Q921K9-1</id>
        <name>1</name>
        <sequence type="displayed"/>
    </isoform>
    <isoform>
        <id>Q921K9-2</id>
        <name>2</name>
        <sequence type="described" ref="VSP_019280 VSP_019281"/>
    </isoform>
</comment>
<comment type="similarity">
    <text evidence="5">Belongs to the BCL7 family.</text>
</comment>
<comment type="sequence caution" evidence="5">
    <conflict type="erroneous initiation">
        <sequence resource="EMBL-CDS" id="CAA09501"/>
    </conflict>
</comment>
<reference key="1">
    <citation type="journal article" date="1998" name="Gene">
        <title>The BCL7 gene family: deletion of BCL7B in Williams syndrome.</title>
        <authorList>
            <person name="Jadayel D.M."/>
            <person name="Osborne L.R."/>
            <person name="Coignet L.J.A."/>
            <person name="Zani V.J."/>
            <person name="Tsui L.-C."/>
            <person name="Scherer S.W."/>
            <person name="Dyer M.J.S."/>
        </authorList>
    </citation>
    <scope>NUCLEOTIDE SEQUENCE [MRNA] (ISOFORM 1)</scope>
</reference>
<reference key="2">
    <citation type="journal article" date="2005" name="Science">
        <title>The transcriptional landscape of the mammalian genome.</title>
        <authorList>
            <person name="Carninci P."/>
            <person name="Kasukawa T."/>
            <person name="Katayama S."/>
            <person name="Gough J."/>
            <person name="Frith M.C."/>
            <person name="Maeda N."/>
            <person name="Oyama R."/>
            <person name="Ravasi T."/>
            <person name="Lenhard B."/>
            <person name="Wells C."/>
            <person name="Kodzius R."/>
            <person name="Shimokawa K."/>
            <person name="Bajic V.B."/>
            <person name="Brenner S.E."/>
            <person name="Batalov S."/>
            <person name="Forrest A.R."/>
            <person name="Zavolan M."/>
            <person name="Davis M.J."/>
            <person name="Wilming L.G."/>
            <person name="Aidinis V."/>
            <person name="Allen J.E."/>
            <person name="Ambesi-Impiombato A."/>
            <person name="Apweiler R."/>
            <person name="Aturaliya R.N."/>
            <person name="Bailey T.L."/>
            <person name="Bansal M."/>
            <person name="Baxter L."/>
            <person name="Beisel K.W."/>
            <person name="Bersano T."/>
            <person name="Bono H."/>
            <person name="Chalk A.M."/>
            <person name="Chiu K.P."/>
            <person name="Choudhary V."/>
            <person name="Christoffels A."/>
            <person name="Clutterbuck D.R."/>
            <person name="Crowe M.L."/>
            <person name="Dalla E."/>
            <person name="Dalrymple B.P."/>
            <person name="de Bono B."/>
            <person name="Della Gatta G."/>
            <person name="di Bernardo D."/>
            <person name="Down T."/>
            <person name="Engstrom P."/>
            <person name="Fagiolini M."/>
            <person name="Faulkner G."/>
            <person name="Fletcher C.F."/>
            <person name="Fukushima T."/>
            <person name="Furuno M."/>
            <person name="Futaki S."/>
            <person name="Gariboldi M."/>
            <person name="Georgii-Hemming P."/>
            <person name="Gingeras T.R."/>
            <person name="Gojobori T."/>
            <person name="Green R.E."/>
            <person name="Gustincich S."/>
            <person name="Harbers M."/>
            <person name="Hayashi Y."/>
            <person name="Hensch T.K."/>
            <person name="Hirokawa N."/>
            <person name="Hill D."/>
            <person name="Huminiecki L."/>
            <person name="Iacono M."/>
            <person name="Ikeo K."/>
            <person name="Iwama A."/>
            <person name="Ishikawa T."/>
            <person name="Jakt M."/>
            <person name="Kanapin A."/>
            <person name="Katoh M."/>
            <person name="Kawasawa Y."/>
            <person name="Kelso J."/>
            <person name="Kitamura H."/>
            <person name="Kitano H."/>
            <person name="Kollias G."/>
            <person name="Krishnan S.P."/>
            <person name="Kruger A."/>
            <person name="Kummerfeld S.K."/>
            <person name="Kurochkin I.V."/>
            <person name="Lareau L.F."/>
            <person name="Lazarevic D."/>
            <person name="Lipovich L."/>
            <person name="Liu J."/>
            <person name="Liuni S."/>
            <person name="McWilliam S."/>
            <person name="Madan Babu M."/>
            <person name="Madera M."/>
            <person name="Marchionni L."/>
            <person name="Matsuda H."/>
            <person name="Matsuzawa S."/>
            <person name="Miki H."/>
            <person name="Mignone F."/>
            <person name="Miyake S."/>
            <person name="Morris K."/>
            <person name="Mottagui-Tabar S."/>
            <person name="Mulder N."/>
            <person name="Nakano N."/>
            <person name="Nakauchi H."/>
            <person name="Ng P."/>
            <person name="Nilsson R."/>
            <person name="Nishiguchi S."/>
            <person name="Nishikawa S."/>
            <person name="Nori F."/>
            <person name="Ohara O."/>
            <person name="Okazaki Y."/>
            <person name="Orlando V."/>
            <person name="Pang K.C."/>
            <person name="Pavan W.J."/>
            <person name="Pavesi G."/>
            <person name="Pesole G."/>
            <person name="Petrovsky N."/>
            <person name="Piazza S."/>
            <person name="Reed J."/>
            <person name="Reid J.F."/>
            <person name="Ring B.Z."/>
            <person name="Ringwald M."/>
            <person name="Rost B."/>
            <person name="Ruan Y."/>
            <person name="Salzberg S.L."/>
            <person name="Sandelin A."/>
            <person name="Schneider C."/>
            <person name="Schoenbach C."/>
            <person name="Sekiguchi K."/>
            <person name="Semple C.A."/>
            <person name="Seno S."/>
            <person name="Sessa L."/>
            <person name="Sheng Y."/>
            <person name="Shibata Y."/>
            <person name="Shimada H."/>
            <person name="Shimada K."/>
            <person name="Silva D."/>
            <person name="Sinclair B."/>
            <person name="Sperling S."/>
            <person name="Stupka E."/>
            <person name="Sugiura K."/>
            <person name="Sultana R."/>
            <person name="Takenaka Y."/>
            <person name="Taki K."/>
            <person name="Tammoja K."/>
            <person name="Tan S.L."/>
            <person name="Tang S."/>
            <person name="Taylor M.S."/>
            <person name="Tegner J."/>
            <person name="Teichmann S.A."/>
            <person name="Ueda H.R."/>
            <person name="van Nimwegen E."/>
            <person name="Verardo R."/>
            <person name="Wei C.L."/>
            <person name="Yagi K."/>
            <person name="Yamanishi H."/>
            <person name="Zabarovsky E."/>
            <person name="Zhu S."/>
            <person name="Zimmer A."/>
            <person name="Hide W."/>
            <person name="Bult C."/>
            <person name="Grimmond S.M."/>
            <person name="Teasdale R.D."/>
            <person name="Liu E.T."/>
            <person name="Brusic V."/>
            <person name="Quackenbush J."/>
            <person name="Wahlestedt C."/>
            <person name="Mattick J.S."/>
            <person name="Hume D.A."/>
            <person name="Kai C."/>
            <person name="Sasaki D."/>
            <person name="Tomaru Y."/>
            <person name="Fukuda S."/>
            <person name="Kanamori-Katayama M."/>
            <person name="Suzuki M."/>
            <person name="Aoki J."/>
            <person name="Arakawa T."/>
            <person name="Iida J."/>
            <person name="Imamura K."/>
            <person name="Itoh M."/>
            <person name="Kato T."/>
            <person name="Kawaji H."/>
            <person name="Kawagashira N."/>
            <person name="Kawashima T."/>
            <person name="Kojima M."/>
            <person name="Kondo S."/>
            <person name="Konno H."/>
            <person name="Nakano K."/>
            <person name="Ninomiya N."/>
            <person name="Nishio T."/>
            <person name="Okada M."/>
            <person name="Plessy C."/>
            <person name="Shibata K."/>
            <person name="Shiraki T."/>
            <person name="Suzuki S."/>
            <person name="Tagami M."/>
            <person name="Waki K."/>
            <person name="Watahiki A."/>
            <person name="Okamura-Oho Y."/>
            <person name="Suzuki H."/>
            <person name="Kawai J."/>
            <person name="Hayashizaki Y."/>
        </authorList>
    </citation>
    <scope>NUCLEOTIDE SEQUENCE [LARGE SCALE MRNA] (ISOFORMS 1 AND 2)</scope>
    <source>
        <strain>C57BL/6J</strain>
        <strain>NOD</strain>
        <tissue>Cerebellum</tissue>
        <tissue>Pancreas</tissue>
    </source>
</reference>
<reference key="3">
    <citation type="journal article" date="2004" name="Genome Res.">
        <title>The status, quality, and expansion of the NIH full-length cDNA project: the Mammalian Gene Collection (MGC).</title>
        <authorList>
            <consortium name="The MGC Project Team"/>
        </authorList>
    </citation>
    <scope>NUCLEOTIDE SEQUENCE [LARGE SCALE MRNA] (ISOFORM 1)</scope>
    <source>
        <strain>Czech II</strain>
        <tissue>Mammary tumor</tissue>
    </source>
</reference>
<reference key="4">
    <citation type="journal article" date="2004" name="Oncogene">
        <title>Molecular profiling of mouse lung tumors: association with tumor progression, lung development, and human lung adenocarcinomas.</title>
        <authorList>
            <person name="Bonner A.E."/>
            <person name="Lemon W.J."/>
            <person name="Devereux T.R."/>
            <person name="Lubet R.A."/>
            <person name="You M."/>
        </authorList>
    </citation>
    <scope>FUNCTION</scope>
</reference>
<reference key="5">
    <citation type="journal article" date="2007" name="Proc. Natl. Acad. Sci. U.S.A.">
        <title>Large-scale phosphorylation analysis of mouse liver.</title>
        <authorList>
            <person name="Villen J."/>
            <person name="Beausoleil S.A."/>
            <person name="Gerber S.A."/>
            <person name="Gygi S.P."/>
        </authorList>
    </citation>
    <scope>PHOSPHORYLATION [LARGE SCALE ANALYSIS] AT SER-118 AND SER-122</scope>
    <scope>IDENTIFICATION BY MASS SPECTROMETRY [LARGE SCALE ANALYSIS]</scope>
    <source>
        <tissue>Liver</tissue>
    </source>
</reference>
<reference key="6">
    <citation type="journal article" date="2009" name="Immunity">
        <title>The phagosomal proteome in interferon-gamma-activated macrophages.</title>
        <authorList>
            <person name="Trost M."/>
            <person name="English L."/>
            <person name="Lemieux S."/>
            <person name="Courcelles M."/>
            <person name="Desjardins M."/>
            <person name="Thibault P."/>
        </authorList>
    </citation>
    <scope>IDENTIFICATION BY MASS SPECTROMETRY [LARGE SCALE ANALYSIS]</scope>
</reference>
<reference key="7">
    <citation type="journal article" date="2010" name="Cell">
        <title>A tissue-specific atlas of mouse protein phosphorylation and expression.</title>
        <authorList>
            <person name="Huttlin E.L."/>
            <person name="Jedrychowski M.P."/>
            <person name="Elias J.E."/>
            <person name="Goswami T."/>
            <person name="Rad R."/>
            <person name="Beausoleil S.A."/>
            <person name="Villen J."/>
            <person name="Haas W."/>
            <person name="Sowa M.E."/>
            <person name="Gygi S.P."/>
        </authorList>
    </citation>
    <scope>PHOSPHORYLATION [LARGE SCALE ANALYSIS] AT SER-114; SER-118; SER-120; SER-122; SER-127; SER-148 AND SER-152</scope>
    <scope>IDENTIFICATION BY MASS SPECTROMETRY [LARGE SCALE ANALYSIS]</scope>
    <source>
        <tissue>Brain</tissue>
        <tissue>Heart</tissue>
        <tissue>Kidney</tissue>
        <tissue>Liver</tissue>
        <tissue>Lung</tissue>
        <tissue>Spleen</tissue>
        <tissue>Testis</tissue>
    </source>
</reference>